<sequence length="267" mass="28743">MNALLSNPFKEGLRKGDTQIGLWLSSTTSYMAEIAATSGYDWLLIDGEHAPNTVQDLYHQLQAIAPYASQPVIRPIEGSKALIKQVLDIGAQTLLIPMVDTAEQARQVVSATRYPPLGQRGVGASVARAARWGRIDNYMAQANESLCLLVQVESKVALENLDAILEVEGIDGVFIGPADLSASLGYPDNAGHPEVQRIIESCIYRIRAAGKAAGFLAVDPAMAQKCLAWGANFVAVGVDTMLYTEALDSRLAMFKSVQSVSTAKRSY</sequence>
<organism>
    <name type="scientific">Salmonella heidelberg (strain SL476)</name>
    <dbReference type="NCBI Taxonomy" id="454169"/>
    <lineage>
        <taxon>Bacteria</taxon>
        <taxon>Pseudomonadati</taxon>
        <taxon>Pseudomonadota</taxon>
        <taxon>Gammaproteobacteria</taxon>
        <taxon>Enterobacterales</taxon>
        <taxon>Enterobacteriaceae</taxon>
        <taxon>Salmonella</taxon>
    </lineage>
</organism>
<keyword id="KW-0456">Lyase</keyword>
<keyword id="KW-0460">Magnesium</keyword>
<keyword id="KW-0479">Metal-binding</keyword>
<dbReference type="EC" id="4.1.2.53" evidence="1"/>
<dbReference type="EMBL" id="CP001120">
    <property type="protein sequence ID" value="ACF66133.1"/>
    <property type="molecule type" value="Genomic_DNA"/>
</dbReference>
<dbReference type="SMR" id="B4TBF6"/>
<dbReference type="KEGG" id="seh:SeHA_C2529"/>
<dbReference type="HOGENOM" id="CLU_059964_1_0_6"/>
<dbReference type="Proteomes" id="UP000001866">
    <property type="component" value="Chromosome"/>
</dbReference>
<dbReference type="GO" id="GO:0005737">
    <property type="term" value="C:cytoplasm"/>
    <property type="evidence" value="ECO:0007669"/>
    <property type="project" value="TreeGrafter"/>
</dbReference>
<dbReference type="GO" id="GO:0106099">
    <property type="term" value="F:2-keto-3-deoxy-L-rhamnonate aldolase activity"/>
    <property type="evidence" value="ECO:0007669"/>
    <property type="project" value="UniProtKB-EC"/>
</dbReference>
<dbReference type="GO" id="GO:0000287">
    <property type="term" value="F:magnesium ion binding"/>
    <property type="evidence" value="ECO:0007669"/>
    <property type="project" value="UniProtKB-UniRule"/>
</dbReference>
<dbReference type="FunFam" id="3.20.20.60:FF:000004">
    <property type="entry name" value="5-keto-4-deoxy-D-glucarate aldolase"/>
    <property type="match status" value="1"/>
</dbReference>
<dbReference type="Gene3D" id="3.20.20.60">
    <property type="entry name" value="Phosphoenolpyruvate-binding domains"/>
    <property type="match status" value="1"/>
</dbReference>
<dbReference type="HAMAP" id="MF_01290">
    <property type="entry name" value="KDR_aldolase"/>
    <property type="match status" value="1"/>
</dbReference>
<dbReference type="InterPro" id="IPR005000">
    <property type="entry name" value="Aldolase/citrate-lyase_domain"/>
</dbReference>
<dbReference type="InterPro" id="IPR050251">
    <property type="entry name" value="HpcH-HpaI_aldolase"/>
</dbReference>
<dbReference type="InterPro" id="IPR023593">
    <property type="entry name" value="KDR_aldolase"/>
</dbReference>
<dbReference type="InterPro" id="IPR015813">
    <property type="entry name" value="Pyrv/PenolPyrv_kinase-like_dom"/>
</dbReference>
<dbReference type="InterPro" id="IPR040442">
    <property type="entry name" value="Pyrv_kinase-like_dom_sf"/>
</dbReference>
<dbReference type="NCBIfam" id="NF007521">
    <property type="entry name" value="PRK10128.1"/>
    <property type="match status" value="1"/>
</dbReference>
<dbReference type="PANTHER" id="PTHR30502">
    <property type="entry name" value="2-KETO-3-DEOXY-L-RHAMNONATE ALDOLASE"/>
    <property type="match status" value="1"/>
</dbReference>
<dbReference type="PANTHER" id="PTHR30502:SF5">
    <property type="entry name" value="2-KETO-3-DEOXY-L-RHAMNONATE ALDOLASE"/>
    <property type="match status" value="1"/>
</dbReference>
<dbReference type="Pfam" id="PF03328">
    <property type="entry name" value="HpcH_HpaI"/>
    <property type="match status" value="1"/>
</dbReference>
<dbReference type="SUPFAM" id="SSF51621">
    <property type="entry name" value="Phosphoenolpyruvate/pyruvate domain"/>
    <property type="match status" value="1"/>
</dbReference>
<protein>
    <recommendedName>
        <fullName evidence="1">2-keto-3-deoxy-L-rhamnonate aldolase</fullName>
        <shortName evidence="1">KDR aldolase</shortName>
        <ecNumber evidence="1">4.1.2.53</ecNumber>
    </recommendedName>
    <alternativeName>
        <fullName evidence="1">2-dehydro-3-deoxyrhamnonate aldolase</fullName>
    </alternativeName>
</protein>
<reference key="1">
    <citation type="journal article" date="2011" name="J. Bacteriol.">
        <title>Comparative genomics of 28 Salmonella enterica isolates: evidence for CRISPR-mediated adaptive sublineage evolution.</title>
        <authorList>
            <person name="Fricke W.F."/>
            <person name="Mammel M.K."/>
            <person name="McDermott P.F."/>
            <person name="Tartera C."/>
            <person name="White D.G."/>
            <person name="Leclerc J.E."/>
            <person name="Ravel J."/>
            <person name="Cebula T.A."/>
        </authorList>
    </citation>
    <scope>NUCLEOTIDE SEQUENCE [LARGE SCALE GENOMIC DNA]</scope>
    <source>
        <strain>SL476</strain>
    </source>
</reference>
<gene>
    <name evidence="1" type="primary">rhmA</name>
    <name type="ordered locus">SeHA_C2529</name>
</gene>
<accession>B4TBF6</accession>
<evidence type="ECO:0000255" key="1">
    <source>
        <dbReference type="HAMAP-Rule" id="MF_01290"/>
    </source>
</evidence>
<name>RHMA_SALHS</name>
<comment type="function">
    <text evidence="1">Catalyzes the reversible retro-aldol cleavage of 2-keto-3-deoxy-L-rhamnonate (KDR) to pyruvate and lactaldehyde.</text>
</comment>
<comment type="catalytic activity">
    <reaction evidence="1">
        <text>2-dehydro-3-deoxy-L-rhamnonate = (S)-lactaldehyde + pyruvate</text>
        <dbReference type="Rhea" id="RHEA:25784"/>
        <dbReference type="ChEBI" id="CHEBI:15361"/>
        <dbReference type="ChEBI" id="CHEBI:18041"/>
        <dbReference type="ChEBI" id="CHEBI:58371"/>
        <dbReference type="EC" id="4.1.2.53"/>
    </reaction>
</comment>
<comment type="cofactor">
    <cofactor evidence="1">
        <name>Mg(2+)</name>
        <dbReference type="ChEBI" id="CHEBI:18420"/>
    </cofactor>
    <text evidence="1">Binds 1 Mg(2+) ion per subunit.</text>
</comment>
<comment type="subunit">
    <text evidence="1">Homohexamer.</text>
</comment>
<comment type="similarity">
    <text evidence="1">Belongs to the HpcH/HpaI aldolase family. KDR aldolase subfamily.</text>
</comment>
<proteinExistence type="inferred from homology"/>
<feature type="chain" id="PRO_1000140400" description="2-keto-3-deoxy-L-rhamnonate aldolase">
    <location>
        <begin position="1"/>
        <end position="267"/>
    </location>
</feature>
<feature type="active site" description="Proton acceptor" evidence="1">
    <location>
        <position position="49"/>
    </location>
</feature>
<feature type="binding site" evidence="1">
    <location>
        <position position="151"/>
    </location>
    <ligand>
        <name>substrate</name>
    </ligand>
</feature>
<feature type="binding site" evidence="1">
    <location>
        <position position="153"/>
    </location>
    <ligand>
        <name>Mg(2+)</name>
        <dbReference type="ChEBI" id="CHEBI:18420"/>
    </ligand>
</feature>
<feature type="binding site" evidence="1">
    <location>
        <position position="178"/>
    </location>
    <ligand>
        <name>substrate</name>
    </ligand>
</feature>
<feature type="binding site" evidence="1">
    <location>
        <position position="179"/>
    </location>
    <ligand>
        <name>Mg(2+)</name>
        <dbReference type="ChEBI" id="CHEBI:18420"/>
    </ligand>
</feature>
<feature type="binding site" evidence="1">
    <location>
        <position position="179"/>
    </location>
    <ligand>
        <name>substrate</name>
    </ligand>
</feature>
<feature type="site" description="Transition state stabilizer" evidence="1">
    <location>
        <position position="74"/>
    </location>
</feature>
<feature type="site" description="Increases basicity of active site His" evidence="1">
    <location>
        <position position="88"/>
    </location>
</feature>